<keyword id="KW-0150">Chloroplast</keyword>
<keyword id="KW-0472">Membrane</keyword>
<keyword id="KW-0602">Photosynthesis</keyword>
<keyword id="KW-0604">Photosystem II</keyword>
<keyword id="KW-0934">Plastid</keyword>
<keyword id="KW-0674">Reaction center</keyword>
<keyword id="KW-0793">Thylakoid</keyword>
<keyword id="KW-0812">Transmembrane</keyword>
<keyword id="KW-1133">Transmembrane helix</keyword>
<feature type="chain" id="PRO_0000219727" description="Photosystem II reaction center protein L">
    <location>
        <begin position="1"/>
        <end position="38"/>
    </location>
</feature>
<feature type="transmembrane region" description="Helical" evidence="1">
    <location>
        <begin position="17"/>
        <end position="37"/>
    </location>
</feature>
<accession>Q7H8J9</accession>
<organism>
    <name type="scientific">Ipomoea batatas</name>
    <name type="common">Sweet potato</name>
    <name type="synonym">Convolvulus batatas</name>
    <dbReference type="NCBI Taxonomy" id="4120"/>
    <lineage>
        <taxon>Eukaryota</taxon>
        <taxon>Viridiplantae</taxon>
        <taxon>Streptophyta</taxon>
        <taxon>Embryophyta</taxon>
        <taxon>Tracheophyta</taxon>
        <taxon>Spermatophyta</taxon>
        <taxon>Magnoliopsida</taxon>
        <taxon>eudicotyledons</taxon>
        <taxon>Gunneridae</taxon>
        <taxon>Pentapetalae</taxon>
        <taxon>asterids</taxon>
        <taxon>lamiids</taxon>
        <taxon>Solanales</taxon>
        <taxon>Convolvulaceae</taxon>
        <taxon>Ipomoeeae</taxon>
        <taxon>Ipomoea</taxon>
    </lineage>
</organism>
<reference key="1">
    <citation type="journal article" date="2002" name="Am. J. Bot.">
        <title>Monophyly of the Convolvulaceae and circumscription of their major lineages based on DNA sequences of multiple chloroplast loci.</title>
        <authorList>
            <person name="Stefanovic S."/>
            <person name="Krueger L."/>
            <person name="Olmstead R.G."/>
        </authorList>
        <dbReference type="AGRICOLA" id="IND23320510"/>
    </citation>
    <scope>NUCLEOTIDE SEQUENCE [GENOMIC DNA]</scope>
</reference>
<sequence>MTQSNPNEQNVELNRTSLYWGLLLIFVLAVLFSNYFFN</sequence>
<gene>
    <name evidence="1" type="primary">psbL</name>
</gene>
<geneLocation type="chloroplast"/>
<comment type="function">
    <text evidence="1">One of the components of the core complex of photosystem II (PSII). PSII is a light-driven water:plastoquinone oxidoreductase that uses light energy to abstract electrons from H(2)O, generating O(2) and a proton gradient subsequently used for ATP formation. It consists of a core antenna complex that captures photons, and an electron transfer chain that converts photonic excitation into a charge separation. This subunit is found at the monomer-monomer interface and is required for correct PSII assembly and/or dimerization.</text>
</comment>
<comment type="subunit">
    <text evidence="1">PSII is composed of 1 copy each of membrane proteins PsbA, PsbB, PsbC, PsbD, PsbE, PsbF, PsbH, PsbI, PsbJ, PsbK, PsbL, PsbM, PsbT, PsbX, PsbY, PsbZ, Psb30/Ycf12, at least 3 peripheral proteins of the oxygen-evolving complex and a large number of cofactors. It forms dimeric complexes.</text>
</comment>
<comment type="subcellular location">
    <subcellularLocation>
        <location evidence="1">Plastid</location>
        <location evidence="1">Chloroplast thylakoid membrane</location>
        <topology evidence="1">Single-pass membrane protein</topology>
    </subcellularLocation>
</comment>
<comment type="similarity">
    <text evidence="1">Belongs to the PsbL family.</text>
</comment>
<evidence type="ECO:0000255" key="1">
    <source>
        <dbReference type="HAMAP-Rule" id="MF_01317"/>
    </source>
</evidence>
<protein>
    <recommendedName>
        <fullName evidence="1">Photosystem II reaction center protein L</fullName>
        <shortName evidence="1">PSII-L</shortName>
    </recommendedName>
</protein>
<name>PSBL_IPOBA</name>
<proteinExistence type="inferred from homology"/>
<dbReference type="EMBL" id="AY100860">
    <property type="protein sequence ID" value="AAM55563.1"/>
    <property type="molecule type" value="Genomic_DNA"/>
</dbReference>
<dbReference type="RefSeq" id="YP_009128406.1">
    <property type="nucleotide sequence ID" value="NC_026703.1"/>
</dbReference>
<dbReference type="SMR" id="Q7H8J9"/>
<dbReference type="GeneID" id="23764583"/>
<dbReference type="GO" id="GO:0009535">
    <property type="term" value="C:chloroplast thylakoid membrane"/>
    <property type="evidence" value="ECO:0007669"/>
    <property type="project" value="UniProtKB-SubCell"/>
</dbReference>
<dbReference type="GO" id="GO:0009539">
    <property type="term" value="C:photosystem II reaction center"/>
    <property type="evidence" value="ECO:0007669"/>
    <property type="project" value="InterPro"/>
</dbReference>
<dbReference type="GO" id="GO:0015979">
    <property type="term" value="P:photosynthesis"/>
    <property type="evidence" value="ECO:0007669"/>
    <property type="project" value="UniProtKB-UniRule"/>
</dbReference>
<dbReference type="HAMAP" id="MF_01317">
    <property type="entry name" value="PSII_PsbL"/>
    <property type="match status" value="1"/>
</dbReference>
<dbReference type="InterPro" id="IPR003372">
    <property type="entry name" value="PSII_PsbL"/>
</dbReference>
<dbReference type="InterPro" id="IPR037266">
    <property type="entry name" value="PSII_PsbL_sf"/>
</dbReference>
<dbReference type="NCBIfam" id="NF001972">
    <property type="entry name" value="PRK00753.1"/>
    <property type="match status" value="1"/>
</dbReference>
<dbReference type="Pfam" id="PF02419">
    <property type="entry name" value="PsbL"/>
    <property type="match status" value="1"/>
</dbReference>
<dbReference type="SUPFAM" id="SSF161017">
    <property type="entry name" value="Photosystem II reaction center protein L, PsbL"/>
    <property type="match status" value="1"/>
</dbReference>